<proteinExistence type="inferred from homology"/>
<name>ATPD_CLOB8</name>
<keyword id="KW-0066">ATP synthesis</keyword>
<keyword id="KW-1003">Cell membrane</keyword>
<keyword id="KW-0139">CF(1)</keyword>
<keyword id="KW-0375">Hydrogen ion transport</keyword>
<keyword id="KW-0406">Ion transport</keyword>
<keyword id="KW-0472">Membrane</keyword>
<keyword id="KW-0813">Transport</keyword>
<accession>A6LQH3</accession>
<feature type="chain" id="PRO_0000370944" description="ATP synthase subunit delta">
    <location>
        <begin position="1"/>
        <end position="179"/>
    </location>
</feature>
<organism>
    <name type="scientific">Clostridium beijerinckii (strain ATCC 51743 / NCIMB 8052)</name>
    <name type="common">Clostridium acetobutylicum</name>
    <dbReference type="NCBI Taxonomy" id="290402"/>
    <lineage>
        <taxon>Bacteria</taxon>
        <taxon>Bacillati</taxon>
        <taxon>Bacillota</taxon>
        <taxon>Clostridia</taxon>
        <taxon>Eubacteriales</taxon>
        <taxon>Clostridiaceae</taxon>
        <taxon>Clostridium</taxon>
    </lineage>
</organism>
<sequence length="179" mass="21271">MQEYLEKRYALALYEIAEKNNKVDEYLRDLTDICDIFDENKEFYEVINHPKINTAKKKQLFTDLFKGKIDEELLSFMMILIEKDRILQLREILDQMEKIDLERRNTIRGIVKTVVPLLDEELEQLKAIFEKKYEKNILFDTKIDKSLLGGVYVKVGNDIIDGTIKSKVEEMKELMLKKE</sequence>
<evidence type="ECO:0000255" key="1">
    <source>
        <dbReference type="HAMAP-Rule" id="MF_01416"/>
    </source>
</evidence>
<comment type="function">
    <text evidence="1">F(1)F(0) ATP synthase produces ATP from ADP in the presence of a proton or sodium gradient. F-type ATPases consist of two structural domains, F(1) containing the extramembraneous catalytic core and F(0) containing the membrane proton channel, linked together by a central stalk and a peripheral stalk. During catalysis, ATP synthesis in the catalytic domain of F(1) is coupled via a rotary mechanism of the central stalk subunits to proton translocation.</text>
</comment>
<comment type="function">
    <text evidence="1">This protein is part of the stalk that links CF(0) to CF(1). It either transmits conformational changes from CF(0) to CF(1) or is implicated in proton conduction.</text>
</comment>
<comment type="subunit">
    <text evidence="1">F-type ATPases have 2 components, F(1) - the catalytic core - and F(0) - the membrane proton channel. F(1) has five subunits: alpha(3), beta(3), gamma(1), delta(1), epsilon(1). F(0) has three main subunits: a(1), b(2) and c(10-14). The alpha and beta chains form an alternating ring which encloses part of the gamma chain. F(1) is attached to F(0) by a central stalk formed by the gamma and epsilon chains, while a peripheral stalk is formed by the delta and b chains.</text>
</comment>
<comment type="subcellular location">
    <subcellularLocation>
        <location evidence="1">Cell membrane</location>
        <topology evidence="1">Peripheral membrane protein</topology>
    </subcellularLocation>
</comment>
<comment type="similarity">
    <text evidence="1">Belongs to the ATPase delta chain family.</text>
</comment>
<dbReference type="EMBL" id="CP000721">
    <property type="protein sequence ID" value="ABR32603.1"/>
    <property type="molecule type" value="Genomic_DNA"/>
</dbReference>
<dbReference type="RefSeq" id="WP_011967764.1">
    <property type="nucleotide sequence ID" value="NC_009617.1"/>
</dbReference>
<dbReference type="SMR" id="A6LQH3"/>
<dbReference type="GeneID" id="66343327"/>
<dbReference type="KEGG" id="cbe:Cbei_0415"/>
<dbReference type="eggNOG" id="COG0712">
    <property type="taxonomic scope" value="Bacteria"/>
</dbReference>
<dbReference type="HOGENOM" id="CLU_085114_4_0_9"/>
<dbReference type="Proteomes" id="UP000000565">
    <property type="component" value="Chromosome"/>
</dbReference>
<dbReference type="GO" id="GO:0005886">
    <property type="term" value="C:plasma membrane"/>
    <property type="evidence" value="ECO:0007669"/>
    <property type="project" value="UniProtKB-SubCell"/>
</dbReference>
<dbReference type="GO" id="GO:0045259">
    <property type="term" value="C:proton-transporting ATP synthase complex"/>
    <property type="evidence" value="ECO:0007669"/>
    <property type="project" value="UniProtKB-KW"/>
</dbReference>
<dbReference type="GO" id="GO:0046933">
    <property type="term" value="F:proton-transporting ATP synthase activity, rotational mechanism"/>
    <property type="evidence" value="ECO:0007669"/>
    <property type="project" value="UniProtKB-UniRule"/>
</dbReference>
<dbReference type="Gene3D" id="1.10.520.20">
    <property type="entry name" value="N-terminal domain of the delta subunit of the F1F0-ATP synthase"/>
    <property type="match status" value="1"/>
</dbReference>
<dbReference type="HAMAP" id="MF_01416">
    <property type="entry name" value="ATP_synth_delta_bact"/>
    <property type="match status" value="1"/>
</dbReference>
<dbReference type="InterPro" id="IPR026015">
    <property type="entry name" value="ATP_synth_OSCP/delta_N_sf"/>
</dbReference>
<dbReference type="InterPro" id="IPR020781">
    <property type="entry name" value="ATPase_OSCP/d_CS"/>
</dbReference>
<dbReference type="InterPro" id="IPR000711">
    <property type="entry name" value="ATPase_OSCP/dsu"/>
</dbReference>
<dbReference type="NCBIfam" id="TIGR01145">
    <property type="entry name" value="ATP_synt_delta"/>
    <property type="match status" value="1"/>
</dbReference>
<dbReference type="NCBIfam" id="NF004403">
    <property type="entry name" value="PRK05758.2-4"/>
    <property type="match status" value="1"/>
</dbReference>
<dbReference type="PANTHER" id="PTHR11910">
    <property type="entry name" value="ATP SYNTHASE DELTA CHAIN"/>
    <property type="match status" value="1"/>
</dbReference>
<dbReference type="Pfam" id="PF00213">
    <property type="entry name" value="OSCP"/>
    <property type="match status" value="1"/>
</dbReference>
<dbReference type="PRINTS" id="PR00125">
    <property type="entry name" value="ATPASEDELTA"/>
</dbReference>
<dbReference type="SUPFAM" id="SSF47928">
    <property type="entry name" value="N-terminal domain of the delta subunit of the F1F0-ATP synthase"/>
    <property type="match status" value="1"/>
</dbReference>
<dbReference type="PROSITE" id="PS00389">
    <property type="entry name" value="ATPASE_DELTA"/>
    <property type="match status" value="1"/>
</dbReference>
<gene>
    <name evidence="1" type="primary">atpH</name>
    <name type="ordered locus">Cbei_0415</name>
</gene>
<protein>
    <recommendedName>
        <fullName evidence="1">ATP synthase subunit delta</fullName>
    </recommendedName>
    <alternativeName>
        <fullName evidence="1">ATP synthase F(1) sector subunit delta</fullName>
    </alternativeName>
    <alternativeName>
        <fullName evidence="1">F-type ATPase subunit delta</fullName>
        <shortName evidence="1">F-ATPase subunit delta</shortName>
    </alternativeName>
</protein>
<reference key="1">
    <citation type="submission" date="2007-06" db="EMBL/GenBank/DDBJ databases">
        <title>Complete sequence of Clostridium beijerinckii NCIMB 8052.</title>
        <authorList>
            <consortium name="US DOE Joint Genome Institute"/>
            <person name="Copeland A."/>
            <person name="Lucas S."/>
            <person name="Lapidus A."/>
            <person name="Barry K."/>
            <person name="Detter J.C."/>
            <person name="Glavina del Rio T."/>
            <person name="Hammon N."/>
            <person name="Israni S."/>
            <person name="Dalin E."/>
            <person name="Tice H."/>
            <person name="Pitluck S."/>
            <person name="Sims D."/>
            <person name="Brettin T."/>
            <person name="Bruce D."/>
            <person name="Tapia R."/>
            <person name="Brainard J."/>
            <person name="Schmutz J."/>
            <person name="Larimer F."/>
            <person name="Land M."/>
            <person name="Hauser L."/>
            <person name="Kyrpides N."/>
            <person name="Mikhailova N."/>
            <person name="Bennet G."/>
            <person name="Cann I."/>
            <person name="Chen J.-S."/>
            <person name="Contreras A.L."/>
            <person name="Jones D."/>
            <person name="Kashket E."/>
            <person name="Mitchell W."/>
            <person name="Stoddard S."/>
            <person name="Schwarz W."/>
            <person name="Qureshi N."/>
            <person name="Young M."/>
            <person name="Shi Z."/>
            <person name="Ezeji T."/>
            <person name="White B."/>
            <person name="Blaschek H."/>
            <person name="Richardson P."/>
        </authorList>
    </citation>
    <scope>NUCLEOTIDE SEQUENCE [LARGE SCALE GENOMIC DNA]</scope>
    <source>
        <strain>ATCC 51743 / NCIMB 8052</strain>
    </source>
</reference>